<dbReference type="EMBL" id="AF010304">
    <property type="protein sequence ID" value="AAC04242.1"/>
    <property type="molecule type" value="mRNA"/>
</dbReference>
<dbReference type="EMBL" id="AF017149">
    <property type="protein sequence ID" value="AAC83190.1"/>
    <property type="molecule type" value="Genomic_RNA"/>
</dbReference>
<dbReference type="PIR" id="T08208">
    <property type="entry name" value="T08208"/>
</dbReference>
<dbReference type="IntAct" id="O55779">
    <property type="interactions" value="9"/>
</dbReference>
<dbReference type="Proteomes" id="UP000008771">
    <property type="component" value="Segment"/>
</dbReference>
<dbReference type="GO" id="GO:0052170">
    <property type="term" value="P:symbiont-mediated suppression of host innate immune response"/>
    <property type="evidence" value="ECO:0007669"/>
    <property type="project" value="UniProtKB-KW"/>
</dbReference>
<dbReference type="InterPro" id="IPR031812">
    <property type="entry name" value="C_Hendra"/>
</dbReference>
<dbReference type="Pfam" id="PF16821">
    <property type="entry name" value="C_Hendra"/>
    <property type="match status" value="1"/>
</dbReference>
<name>C_HENDH</name>
<organism>
    <name type="scientific">Hendra virus (isolate Horse/Autralia/Hendra/1994)</name>
    <dbReference type="NCBI Taxonomy" id="928303"/>
    <lineage>
        <taxon>Viruses</taxon>
        <taxon>Riboviria</taxon>
        <taxon>Orthornavirae</taxon>
        <taxon>Negarnaviricota</taxon>
        <taxon>Haploviricotina</taxon>
        <taxon>Monjiviricetes</taxon>
        <taxon>Mononegavirales</taxon>
        <taxon>Paramyxoviridae</taxon>
        <taxon>Orthoparamyxovirinae</taxon>
        <taxon>Henipavirus</taxon>
        <taxon>Henipavirus hendraense</taxon>
    </lineage>
</organism>
<organismHost>
    <name type="scientific">Equus caballus</name>
    <name type="common">Horse</name>
    <dbReference type="NCBI Taxonomy" id="9796"/>
</organismHost>
<organismHost>
    <name type="scientific">Homo sapiens</name>
    <name type="common">Human</name>
    <dbReference type="NCBI Taxonomy" id="9606"/>
</organismHost>
<organismHost>
    <name type="scientific">Pteropus alecto</name>
    <name type="common">Black flying fox</name>
    <dbReference type="NCBI Taxonomy" id="9402"/>
</organismHost>
<organismHost>
    <name type="scientific">Pteropus poliocephalus</name>
    <name type="common">Grey-headed flying fox</name>
    <dbReference type="NCBI Taxonomy" id="9403"/>
</organismHost>
<organismHost>
    <name type="scientific">Pteropus scapulatus</name>
    <name type="common">Little red flying fox</name>
    <dbReference type="NCBI Taxonomy" id="94117"/>
</organismHost>
<feature type="chain" id="PRO_0000236018" description="Protein C">
    <location>
        <begin position="1"/>
        <end position="166"/>
    </location>
</feature>
<feature type="region of interest" description="Disordered" evidence="1">
    <location>
        <begin position="17"/>
        <end position="42"/>
    </location>
</feature>
<sequence>MMASILLTLFRRTKKKYKRHTDDQASNNQVPKTGQEHGRTSCRAPVENMNRLRGECLRMMEVLKEEMWRIYPVLLPQMELLDKECQTPELGQKTQMTYNWTQWLQTLYTMIMEENVPDMDLLQALREGGVITCQEHTMGMYVLYLIQRCCPMLPKLQFLKKLGKLI</sequence>
<evidence type="ECO:0000256" key="1">
    <source>
        <dbReference type="SAM" id="MobiDB-lite"/>
    </source>
</evidence>
<gene>
    <name type="primary">P/V/C</name>
</gene>
<comment type="function">
    <text>May counteract the cellular interferon antiviral system.</text>
</comment>
<comment type="miscellaneous">
    <text>The P/V/C gene has two overlapping open reading frames. One encodes the P/V/W proteins and the other the C protein.</text>
</comment>
<accession>O55779</accession>
<reference key="1">
    <citation type="journal article" date="1998" name="J. Virol.">
        <title>A novel P/V/C gene in a new member of the Paramyxoviridae family, which causes lethal infection in humans, horses, and other animals.</title>
        <authorList>
            <person name="Wang L.-F."/>
            <person name="Michalski W.P."/>
            <person name="Yu M."/>
            <person name="Pritchard L.I."/>
            <person name="Crameri G."/>
            <person name="Shiell B."/>
            <person name="Eaton B.T."/>
        </authorList>
    </citation>
    <scope>NUCLEOTIDE SEQUENCE [MRNA]</scope>
</reference>
<reference key="2">
    <citation type="journal article" date="2000" name="J. Virol.">
        <title>The exceptionally large genome of Hendra virus: support for creation of a new genus within the family Paramyxoviridae.</title>
        <authorList>
            <person name="Wang L.-F."/>
            <person name="Yu M."/>
            <person name="Hansson E."/>
            <person name="Pritchard L.I."/>
            <person name="Shiell B."/>
            <person name="Michalski W.P."/>
            <person name="Eaton B.T."/>
        </authorList>
    </citation>
    <scope>NUCLEOTIDE SEQUENCE [GENOMIC RNA]</scope>
</reference>
<keyword id="KW-0945">Host-virus interaction</keyword>
<keyword id="KW-1090">Inhibition of host innate immune response by virus</keyword>
<keyword id="KW-0922">Interferon antiviral system evasion</keyword>
<keyword id="KW-1185">Reference proteome</keyword>
<keyword id="KW-0899">Viral immunoevasion</keyword>
<proteinExistence type="evidence at transcript level"/>
<protein>
    <recommendedName>
        <fullName>Protein C</fullName>
    </recommendedName>
</protein>